<gene>
    <name evidence="1" type="primary">trpD</name>
    <name type="ordered locus">Csac_2234</name>
</gene>
<accession>A4XLM7</accession>
<feature type="chain" id="PRO_0000325419" description="Anthranilate phosphoribosyltransferase">
    <location>
        <begin position="1"/>
        <end position="336"/>
    </location>
</feature>
<feature type="binding site" evidence="1">
    <location>
        <position position="80"/>
    </location>
    <ligand>
        <name>5-phospho-alpha-D-ribose 1-diphosphate</name>
        <dbReference type="ChEBI" id="CHEBI:58017"/>
    </ligand>
</feature>
<feature type="binding site" evidence="1">
    <location>
        <position position="80"/>
    </location>
    <ligand>
        <name>anthranilate</name>
        <dbReference type="ChEBI" id="CHEBI:16567"/>
        <label>1</label>
    </ligand>
</feature>
<feature type="binding site" evidence="1">
    <location>
        <begin position="83"/>
        <end position="84"/>
    </location>
    <ligand>
        <name>5-phospho-alpha-D-ribose 1-diphosphate</name>
        <dbReference type="ChEBI" id="CHEBI:58017"/>
    </ligand>
</feature>
<feature type="binding site" evidence="1">
    <location>
        <position position="88"/>
    </location>
    <ligand>
        <name>5-phospho-alpha-D-ribose 1-diphosphate</name>
        <dbReference type="ChEBI" id="CHEBI:58017"/>
    </ligand>
</feature>
<feature type="binding site" evidence="1">
    <location>
        <begin position="90"/>
        <end position="93"/>
    </location>
    <ligand>
        <name>5-phospho-alpha-D-ribose 1-diphosphate</name>
        <dbReference type="ChEBI" id="CHEBI:58017"/>
    </ligand>
</feature>
<feature type="binding site" evidence="1">
    <location>
        <position position="92"/>
    </location>
    <ligand>
        <name>Mg(2+)</name>
        <dbReference type="ChEBI" id="CHEBI:18420"/>
        <label>1</label>
    </ligand>
</feature>
<feature type="binding site" evidence="1">
    <location>
        <begin position="108"/>
        <end position="116"/>
    </location>
    <ligand>
        <name>5-phospho-alpha-D-ribose 1-diphosphate</name>
        <dbReference type="ChEBI" id="CHEBI:58017"/>
    </ligand>
</feature>
<feature type="binding site" evidence="1">
    <location>
        <position position="111"/>
    </location>
    <ligand>
        <name>anthranilate</name>
        <dbReference type="ChEBI" id="CHEBI:16567"/>
        <label>1</label>
    </ligand>
</feature>
<feature type="binding site" evidence="1">
    <location>
        <position position="120"/>
    </location>
    <ligand>
        <name>5-phospho-alpha-D-ribose 1-diphosphate</name>
        <dbReference type="ChEBI" id="CHEBI:58017"/>
    </ligand>
</feature>
<feature type="binding site" evidence="1">
    <location>
        <position position="166"/>
    </location>
    <ligand>
        <name>anthranilate</name>
        <dbReference type="ChEBI" id="CHEBI:16567"/>
        <label>2</label>
    </ligand>
</feature>
<feature type="binding site" evidence="1">
    <location>
        <position position="224"/>
    </location>
    <ligand>
        <name>Mg(2+)</name>
        <dbReference type="ChEBI" id="CHEBI:18420"/>
        <label>2</label>
    </ligand>
</feature>
<feature type="binding site" evidence="1">
    <location>
        <position position="225"/>
    </location>
    <ligand>
        <name>Mg(2+)</name>
        <dbReference type="ChEBI" id="CHEBI:18420"/>
        <label>1</label>
    </ligand>
</feature>
<feature type="binding site" evidence="1">
    <location>
        <position position="225"/>
    </location>
    <ligand>
        <name>Mg(2+)</name>
        <dbReference type="ChEBI" id="CHEBI:18420"/>
        <label>2</label>
    </ligand>
</feature>
<sequence>MLKEALEVVTAKRDLDYGQVKNLLDSILEGELDEMKFGAFLAALKTKGETKEEISAFVDAFYEKAQKIEYTHPKTIDTCGTGGDGKGTFNISTASAIVLSCFDLKVAKHGNRSITSNSGSADILENLGIDIQAPPQRILEGLEKHNFAFLFAPKYHPATKKVATVRKSLGIRTVFNILGPLLNPVSLNYQVVGAFDFEAQEKIASVLKGKRKRAAIIHSLDGLDEISVSQKTRVLELQGDNIKEYYIDPKEYGIEYTLDDIKGYTPQENAKIFRSILNGEVSAYYWAVVLNSAFALYIAEVANDIEEGIALCQSAIKKGDAMLKLKDLQQHYKVGA</sequence>
<dbReference type="EC" id="2.4.2.18" evidence="1"/>
<dbReference type="EMBL" id="CP000679">
    <property type="protein sequence ID" value="ABP67812.1"/>
    <property type="molecule type" value="Genomic_DNA"/>
</dbReference>
<dbReference type="RefSeq" id="WP_011917738.1">
    <property type="nucleotide sequence ID" value="NC_009437.1"/>
</dbReference>
<dbReference type="SMR" id="A4XLM7"/>
<dbReference type="STRING" id="351627.Csac_2234"/>
<dbReference type="KEGG" id="csc:Csac_2234"/>
<dbReference type="eggNOG" id="COG0547">
    <property type="taxonomic scope" value="Bacteria"/>
</dbReference>
<dbReference type="HOGENOM" id="CLU_034315_2_1_9"/>
<dbReference type="OrthoDB" id="9806430at2"/>
<dbReference type="UniPathway" id="UPA00035">
    <property type="reaction ID" value="UER00041"/>
</dbReference>
<dbReference type="Proteomes" id="UP000000256">
    <property type="component" value="Chromosome"/>
</dbReference>
<dbReference type="GO" id="GO:0005829">
    <property type="term" value="C:cytosol"/>
    <property type="evidence" value="ECO:0007669"/>
    <property type="project" value="TreeGrafter"/>
</dbReference>
<dbReference type="GO" id="GO:0004048">
    <property type="term" value="F:anthranilate phosphoribosyltransferase activity"/>
    <property type="evidence" value="ECO:0007669"/>
    <property type="project" value="UniProtKB-UniRule"/>
</dbReference>
<dbReference type="GO" id="GO:0000287">
    <property type="term" value="F:magnesium ion binding"/>
    <property type="evidence" value="ECO:0007669"/>
    <property type="project" value="UniProtKB-UniRule"/>
</dbReference>
<dbReference type="GO" id="GO:0000162">
    <property type="term" value="P:L-tryptophan biosynthetic process"/>
    <property type="evidence" value="ECO:0007669"/>
    <property type="project" value="UniProtKB-UniRule"/>
</dbReference>
<dbReference type="FunFam" id="3.40.1030.10:FF:000002">
    <property type="entry name" value="Anthranilate phosphoribosyltransferase"/>
    <property type="match status" value="1"/>
</dbReference>
<dbReference type="Gene3D" id="3.40.1030.10">
    <property type="entry name" value="Nucleoside phosphorylase/phosphoribosyltransferase catalytic domain"/>
    <property type="match status" value="1"/>
</dbReference>
<dbReference type="Gene3D" id="1.20.970.10">
    <property type="entry name" value="Transferase, Pyrimidine Nucleoside Phosphorylase, Chain C"/>
    <property type="match status" value="1"/>
</dbReference>
<dbReference type="HAMAP" id="MF_00211">
    <property type="entry name" value="TrpD"/>
    <property type="match status" value="1"/>
</dbReference>
<dbReference type="InterPro" id="IPR005940">
    <property type="entry name" value="Anthranilate_Pribosyl_Tfrase"/>
</dbReference>
<dbReference type="InterPro" id="IPR000312">
    <property type="entry name" value="Glycosyl_Trfase_fam3"/>
</dbReference>
<dbReference type="InterPro" id="IPR017459">
    <property type="entry name" value="Glycosyl_Trfase_fam3_N_dom"/>
</dbReference>
<dbReference type="InterPro" id="IPR036320">
    <property type="entry name" value="Glycosyl_Trfase_fam3_N_dom_sf"/>
</dbReference>
<dbReference type="InterPro" id="IPR035902">
    <property type="entry name" value="Nuc_phospho_transferase"/>
</dbReference>
<dbReference type="NCBIfam" id="TIGR01245">
    <property type="entry name" value="trpD"/>
    <property type="match status" value="1"/>
</dbReference>
<dbReference type="PANTHER" id="PTHR43285">
    <property type="entry name" value="ANTHRANILATE PHOSPHORIBOSYLTRANSFERASE"/>
    <property type="match status" value="1"/>
</dbReference>
<dbReference type="PANTHER" id="PTHR43285:SF2">
    <property type="entry name" value="ANTHRANILATE PHOSPHORIBOSYLTRANSFERASE"/>
    <property type="match status" value="1"/>
</dbReference>
<dbReference type="Pfam" id="PF02885">
    <property type="entry name" value="Glycos_trans_3N"/>
    <property type="match status" value="1"/>
</dbReference>
<dbReference type="Pfam" id="PF00591">
    <property type="entry name" value="Glycos_transf_3"/>
    <property type="match status" value="1"/>
</dbReference>
<dbReference type="SUPFAM" id="SSF52418">
    <property type="entry name" value="Nucleoside phosphorylase/phosphoribosyltransferase catalytic domain"/>
    <property type="match status" value="1"/>
</dbReference>
<dbReference type="SUPFAM" id="SSF47648">
    <property type="entry name" value="Nucleoside phosphorylase/phosphoribosyltransferase N-terminal domain"/>
    <property type="match status" value="1"/>
</dbReference>
<protein>
    <recommendedName>
        <fullName evidence="1">Anthranilate phosphoribosyltransferase</fullName>
        <ecNumber evidence="1">2.4.2.18</ecNumber>
    </recommendedName>
</protein>
<reference key="1">
    <citation type="submission" date="2007-04" db="EMBL/GenBank/DDBJ databases">
        <title>Genome sequence of the thermophilic hydrogen-producing bacterium Caldicellulosiruptor saccharolyticus DSM 8903.</title>
        <authorList>
            <person name="Copeland A."/>
            <person name="Lucas S."/>
            <person name="Lapidus A."/>
            <person name="Barry K."/>
            <person name="Detter J.C."/>
            <person name="Glavina del Rio T."/>
            <person name="Hammon N."/>
            <person name="Israni S."/>
            <person name="Dalin E."/>
            <person name="Tice H."/>
            <person name="Pitluck S."/>
            <person name="Kiss H."/>
            <person name="Brettin T."/>
            <person name="Bruce D."/>
            <person name="Han C."/>
            <person name="Schmutz J."/>
            <person name="Larimer F."/>
            <person name="Land M."/>
            <person name="Hauser L."/>
            <person name="Kyrpides N."/>
            <person name="Lykidis A."/>
            <person name="van de Werken H.J.G."/>
            <person name="Verhaart M.R.A."/>
            <person name="VanFossen A.L."/>
            <person name="Lewis D.L."/>
            <person name="Nichols J.D."/>
            <person name="Goorissen H.P."/>
            <person name="van Niel E.W.J."/>
            <person name="Stams F.J.M."/>
            <person name="Willquist K.U."/>
            <person name="Ward D.E."/>
            <person name="van der Oost J."/>
            <person name="Kelly R.M."/>
            <person name="Kengen S.M.W."/>
            <person name="Richardson P."/>
        </authorList>
    </citation>
    <scope>NUCLEOTIDE SEQUENCE [LARGE SCALE GENOMIC DNA]</scope>
    <source>
        <strain>ATCC 43494 / DSM 8903 / Tp8T 6331</strain>
    </source>
</reference>
<name>TRPD_CALS8</name>
<evidence type="ECO:0000255" key="1">
    <source>
        <dbReference type="HAMAP-Rule" id="MF_00211"/>
    </source>
</evidence>
<keyword id="KW-0028">Amino-acid biosynthesis</keyword>
<keyword id="KW-0057">Aromatic amino acid biosynthesis</keyword>
<keyword id="KW-0328">Glycosyltransferase</keyword>
<keyword id="KW-0460">Magnesium</keyword>
<keyword id="KW-0479">Metal-binding</keyword>
<keyword id="KW-0808">Transferase</keyword>
<keyword id="KW-0822">Tryptophan biosynthesis</keyword>
<organism>
    <name type="scientific">Caldicellulosiruptor saccharolyticus (strain ATCC 43494 / DSM 8903 / Tp8T 6331)</name>
    <dbReference type="NCBI Taxonomy" id="351627"/>
    <lineage>
        <taxon>Bacteria</taxon>
        <taxon>Bacillati</taxon>
        <taxon>Bacillota</taxon>
        <taxon>Bacillota incertae sedis</taxon>
        <taxon>Caldicellulosiruptorales</taxon>
        <taxon>Caldicellulosiruptoraceae</taxon>
        <taxon>Caldicellulosiruptor</taxon>
    </lineage>
</organism>
<comment type="function">
    <text evidence="1">Catalyzes the transfer of the phosphoribosyl group of 5-phosphorylribose-1-pyrophosphate (PRPP) to anthranilate to yield N-(5'-phosphoribosyl)-anthranilate (PRA).</text>
</comment>
<comment type="catalytic activity">
    <reaction evidence="1">
        <text>N-(5-phospho-beta-D-ribosyl)anthranilate + diphosphate = 5-phospho-alpha-D-ribose 1-diphosphate + anthranilate</text>
        <dbReference type="Rhea" id="RHEA:11768"/>
        <dbReference type="ChEBI" id="CHEBI:16567"/>
        <dbReference type="ChEBI" id="CHEBI:18277"/>
        <dbReference type="ChEBI" id="CHEBI:33019"/>
        <dbReference type="ChEBI" id="CHEBI:58017"/>
        <dbReference type="EC" id="2.4.2.18"/>
    </reaction>
</comment>
<comment type="cofactor">
    <cofactor evidence="1">
        <name>Mg(2+)</name>
        <dbReference type="ChEBI" id="CHEBI:18420"/>
    </cofactor>
    <text evidence="1">Binds 2 magnesium ions per monomer.</text>
</comment>
<comment type="pathway">
    <text evidence="1">Amino-acid biosynthesis; L-tryptophan biosynthesis; L-tryptophan from chorismate: step 2/5.</text>
</comment>
<comment type="subunit">
    <text evidence="1">Homodimer.</text>
</comment>
<comment type="similarity">
    <text evidence="1">Belongs to the anthranilate phosphoribosyltransferase family.</text>
</comment>
<proteinExistence type="inferred from homology"/>